<comment type="function">
    <text>Plays an important role in the elongation step of protein synthesis.</text>
</comment>
<comment type="subunit">
    <text evidence="1">P1 and P2 exist as dimers at the large ribosomal subunit.</text>
</comment>
<comment type="PTM">
    <text>Phosphorylated.</text>
</comment>
<comment type="similarity">
    <text evidence="3">Belongs to the eukaryotic ribosomal protein P1/P2 family.</text>
</comment>
<reference key="1">
    <citation type="journal article" date="1997" name="Plant Physiol.">
        <title>Acidic phosphoprotein complex of the 60S ribosomal subunit of maize seedling roots. Components and changes in response to flooding.</title>
        <authorList>
            <person name="Bailey-Serres J."/>
            <person name="Vangala S."/>
            <person name="Szick K."/>
            <person name="Lee C.H."/>
        </authorList>
    </citation>
    <scope>NUCLEOTIDE SEQUENCE [MRNA]</scope>
    <scope>PROTEIN SEQUENCE OF 1-14</scope>
    <source>
        <strain>cv. B73</strain>
        <tissue>Ear of corn</tissue>
    </source>
</reference>
<proteinExistence type="evidence at protein level"/>
<dbReference type="EMBL" id="U62753">
    <property type="protein sequence ID" value="AAB71080.1"/>
    <property type="molecule type" value="mRNA"/>
</dbReference>
<dbReference type="PIR" id="T02040">
    <property type="entry name" value="T02040"/>
</dbReference>
<dbReference type="RefSeq" id="NP_001105390.1">
    <property type="nucleotide sequence ID" value="NM_001111920.1"/>
</dbReference>
<dbReference type="RefSeq" id="XP_008655432.1">
    <property type="nucleotide sequence ID" value="XM_008657210.1"/>
</dbReference>
<dbReference type="SMR" id="O24415"/>
<dbReference type="FunCoup" id="O24415">
    <property type="interactions" value="1719"/>
</dbReference>
<dbReference type="STRING" id="4577.O24415"/>
<dbReference type="PaxDb" id="4577-GRMZM2G114954_P04"/>
<dbReference type="EnsemblPlants" id="Zm00001eb348240_T001">
    <property type="protein sequence ID" value="Zm00001eb348240_P001"/>
    <property type="gene ID" value="Zm00001eb348240"/>
</dbReference>
<dbReference type="EnsemblPlants" id="Zm00001eb348240_T003">
    <property type="protein sequence ID" value="Zm00001eb348240_P003"/>
    <property type="gene ID" value="Zm00001eb348240"/>
</dbReference>
<dbReference type="EnsemblPlants" id="Zm00001eb348240_T004">
    <property type="protein sequence ID" value="Zm00001eb348240_P004"/>
    <property type="gene ID" value="Zm00001eb348240"/>
</dbReference>
<dbReference type="GeneID" id="542340"/>
<dbReference type="Gramene" id="Zm00001eb348240_T001">
    <property type="protein sequence ID" value="Zm00001eb348240_P001"/>
    <property type="gene ID" value="Zm00001eb348240"/>
</dbReference>
<dbReference type="Gramene" id="Zm00001eb348240_T003">
    <property type="protein sequence ID" value="Zm00001eb348240_P003"/>
    <property type="gene ID" value="Zm00001eb348240"/>
</dbReference>
<dbReference type="Gramene" id="Zm00001eb348240_T004">
    <property type="protein sequence ID" value="Zm00001eb348240_P004"/>
    <property type="gene ID" value="Zm00001eb348240"/>
</dbReference>
<dbReference type="KEGG" id="zma:542340"/>
<dbReference type="eggNOG" id="KOG3449">
    <property type="taxonomic scope" value="Eukaryota"/>
</dbReference>
<dbReference type="HOGENOM" id="CLU_114656_0_2_1"/>
<dbReference type="InParanoid" id="O24415"/>
<dbReference type="OMA" id="VDCEHDK"/>
<dbReference type="OrthoDB" id="782200at2759"/>
<dbReference type="Proteomes" id="UP000007305">
    <property type="component" value="Chromosome 8"/>
</dbReference>
<dbReference type="ExpressionAtlas" id="O24415">
    <property type="expression patterns" value="baseline and differential"/>
</dbReference>
<dbReference type="GO" id="GO:0022625">
    <property type="term" value="C:cytosolic large ribosomal subunit"/>
    <property type="evidence" value="ECO:0000314"/>
    <property type="project" value="AgBase"/>
</dbReference>
<dbReference type="GO" id="GO:0044877">
    <property type="term" value="F:protein-containing complex binding"/>
    <property type="evidence" value="ECO:0000314"/>
    <property type="project" value="AgBase"/>
</dbReference>
<dbReference type="GO" id="GO:0003735">
    <property type="term" value="F:structural constituent of ribosome"/>
    <property type="evidence" value="ECO:0000304"/>
    <property type="project" value="AgBase"/>
</dbReference>
<dbReference type="GO" id="GO:0002182">
    <property type="term" value="P:cytoplasmic translational elongation"/>
    <property type="evidence" value="ECO:0007669"/>
    <property type="project" value="InterPro"/>
</dbReference>
<dbReference type="CDD" id="cd05833">
    <property type="entry name" value="Ribosomal_P2"/>
    <property type="match status" value="1"/>
</dbReference>
<dbReference type="FunFam" id="1.10.10.1410:FF:000002">
    <property type="entry name" value="60S acidic ribosomal protein P2"/>
    <property type="match status" value="1"/>
</dbReference>
<dbReference type="Gene3D" id="1.10.10.1410">
    <property type="match status" value="1"/>
</dbReference>
<dbReference type="HAMAP" id="MF_01478">
    <property type="entry name" value="Ribosomal_L12_arch"/>
    <property type="match status" value="1"/>
</dbReference>
<dbReference type="InterPro" id="IPR038716">
    <property type="entry name" value="P1/P2_N_sf"/>
</dbReference>
<dbReference type="InterPro" id="IPR027534">
    <property type="entry name" value="Ribosomal_P1/P2"/>
</dbReference>
<dbReference type="InterPro" id="IPR044076">
    <property type="entry name" value="Ribosomal_P2"/>
</dbReference>
<dbReference type="PANTHER" id="PTHR21141">
    <property type="entry name" value="60S ACIDIC RIBOSOMAL PROTEIN FAMILY MEMBER"/>
    <property type="match status" value="1"/>
</dbReference>
<dbReference type="PANTHER" id="PTHR21141:SF5">
    <property type="entry name" value="LARGE RIBOSOMAL SUBUNIT PROTEIN P2"/>
    <property type="match status" value="1"/>
</dbReference>
<dbReference type="Pfam" id="PF00428">
    <property type="entry name" value="Ribosomal_60s"/>
    <property type="match status" value="1"/>
</dbReference>
<feature type="chain" id="PRO_0000157662" description="Large ribosomal subunit protein P2B">
    <location>
        <begin position="1"/>
        <end position="113"/>
    </location>
</feature>
<feature type="region of interest" description="Disordered" evidence="2">
    <location>
        <begin position="66"/>
        <end position="113"/>
    </location>
</feature>
<feature type="compositionally biased region" description="Basic and acidic residues" evidence="2">
    <location>
        <begin position="89"/>
        <end position="99"/>
    </location>
</feature>
<organism>
    <name type="scientific">Zea mays</name>
    <name type="common">Maize</name>
    <dbReference type="NCBI Taxonomy" id="4577"/>
    <lineage>
        <taxon>Eukaryota</taxon>
        <taxon>Viridiplantae</taxon>
        <taxon>Streptophyta</taxon>
        <taxon>Embryophyta</taxon>
        <taxon>Tracheophyta</taxon>
        <taxon>Spermatophyta</taxon>
        <taxon>Magnoliopsida</taxon>
        <taxon>Liliopsida</taxon>
        <taxon>Poales</taxon>
        <taxon>Poaceae</taxon>
        <taxon>PACMAD clade</taxon>
        <taxon>Panicoideae</taxon>
        <taxon>Andropogonodae</taxon>
        <taxon>Andropogoneae</taxon>
        <taxon>Tripsacinae</taxon>
        <taxon>Zea</taxon>
    </lineage>
</organism>
<sequence>MKVIAAYLLAVLGGNTSPTADDVKSILESVGAEADEEKLEFLLTELKDKDITEVIAAGRERLSSVPSGGGAIDMGAPAAVAGGGAAPAEEAKKEEKVEEKEESDEDMGFSLFD</sequence>
<evidence type="ECO:0000250" key="1"/>
<evidence type="ECO:0000256" key="2">
    <source>
        <dbReference type="SAM" id="MobiDB-lite"/>
    </source>
</evidence>
<evidence type="ECO:0000305" key="3"/>
<keyword id="KW-0903">Direct protein sequencing</keyword>
<keyword id="KW-0597">Phosphoprotein</keyword>
<keyword id="KW-1185">Reference proteome</keyword>
<keyword id="KW-0687">Ribonucleoprotein</keyword>
<keyword id="KW-0689">Ribosomal protein</keyword>
<name>RLA2B_MAIZE</name>
<protein>
    <recommendedName>
        <fullName evidence="3">Large ribosomal subunit protein P2B</fullName>
    </recommendedName>
    <alternativeName>
        <fullName evidence="3">60S acidic ribosomal protein P2B</fullName>
    </alternativeName>
</protein>
<accession>O24415</accession>
<gene>
    <name type="primary">RPP2B</name>
</gene>